<dbReference type="EC" id="2.3.2.-" evidence="2"/>
<dbReference type="EMBL" id="AACZ03015911">
    <property type="status" value="NOT_ANNOTATED_CDS"/>
    <property type="molecule type" value="Genomic_DNA"/>
</dbReference>
<dbReference type="PDB" id="4GA1">
    <property type="method" value="X-ray"/>
    <property type="resolution" value="1.15 A"/>
    <property type="chains" value="A=1-145"/>
</dbReference>
<dbReference type="PDB" id="4GA2">
    <property type="method" value="X-ray"/>
    <property type="resolution" value="0.95 A"/>
    <property type="chains" value="A=1-145"/>
</dbReference>
<dbReference type="PDBsum" id="4GA1"/>
<dbReference type="PDBsum" id="4GA2"/>
<dbReference type="SMR" id="H2QII6"/>
<dbReference type="FunCoup" id="H2QII6">
    <property type="interactions" value="4449"/>
</dbReference>
<dbReference type="STRING" id="9598.ENSPTRP00000021122"/>
<dbReference type="PaxDb" id="9598-ENSPTRP00000021122"/>
<dbReference type="eggNOG" id="KOG0864">
    <property type="taxonomic scope" value="Eukaryota"/>
</dbReference>
<dbReference type="eggNOG" id="KOG0865">
    <property type="taxonomic scope" value="Eukaryota"/>
</dbReference>
<dbReference type="HOGENOM" id="CLU_000378_1_0_1"/>
<dbReference type="InParanoid" id="H2QII6"/>
<dbReference type="TreeFam" id="TF314797"/>
<dbReference type="UniPathway" id="UPA00886"/>
<dbReference type="EvolutionaryTrace" id="H2QII6"/>
<dbReference type="Proteomes" id="UP000002277">
    <property type="component" value="Unplaced"/>
</dbReference>
<dbReference type="GO" id="GO:0005642">
    <property type="term" value="C:annulate lamellae"/>
    <property type="evidence" value="ECO:0000250"/>
    <property type="project" value="UniProtKB"/>
</dbReference>
<dbReference type="GO" id="GO:0005737">
    <property type="term" value="C:cytoplasm"/>
    <property type="evidence" value="ECO:0000318"/>
    <property type="project" value="GO_Central"/>
</dbReference>
<dbReference type="GO" id="GO:0005635">
    <property type="term" value="C:nuclear envelope"/>
    <property type="evidence" value="ECO:0000250"/>
    <property type="project" value="UniProtKB"/>
</dbReference>
<dbReference type="GO" id="GO:0031965">
    <property type="term" value="C:nuclear membrane"/>
    <property type="evidence" value="ECO:0007669"/>
    <property type="project" value="UniProtKB-SubCell"/>
</dbReference>
<dbReference type="GO" id="GO:0005643">
    <property type="term" value="C:nuclear pore"/>
    <property type="evidence" value="ECO:0000250"/>
    <property type="project" value="UniProtKB"/>
</dbReference>
<dbReference type="GO" id="GO:0003755">
    <property type="term" value="F:peptidyl-prolyl cis-trans isomerase activity"/>
    <property type="evidence" value="ECO:0007669"/>
    <property type="project" value="InterPro"/>
</dbReference>
<dbReference type="GO" id="GO:0003723">
    <property type="term" value="F:RNA binding"/>
    <property type="evidence" value="ECO:0007669"/>
    <property type="project" value="UniProtKB-KW"/>
</dbReference>
<dbReference type="GO" id="GO:0016740">
    <property type="term" value="F:transferase activity"/>
    <property type="evidence" value="ECO:0007669"/>
    <property type="project" value="UniProtKB-KW"/>
</dbReference>
<dbReference type="GO" id="GO:0008270">
    <property type="term" value="F:zinc ion binding"/>
    <property type="evidence" value="ECO:0007669"/>
    <property type="project" value="UniProtKB-KW"/>
</dbReference>
<dbReference type="GO" id="GO:0051028">
    <property type="term" value="P:mRNA transport"/>
    <property type="evidence" value="ECO:0007669"/>
    <property type="project" value="UniProtKB-KW"/>
</dbReference>
<dbReference type="GO" id="GO:0006607">
    <property type="term" value="P:NLS-bearing protein import into nucleus"/>
    <property type="evidence" value="ECO:0000318"/>
    <property type="project" value="GO_Central"/>
</dbReference>
<dbReference type="GO" id="GO:0006457">
    <property type="term" value="P:protein folding"/>
    <property type="evidence" value="ECO:0007669"/>
    <property type="project" value="InterPro"/>
</dbReference>
<dbReference type="GO" id="GO:0016925">
    <property type="term" value="P:protein sumoylation"/>
    <property type="evidence" value="ECO:0007669"/>
    <property type="project" value="UniProtKB-UniPathway"/>
</dbReference>
<dbReference type="CDD" id="cd01926">
    <property type="entry name" value="cyclophilin_ABH_like"/>
    <property type="match status" value="1"/>
</dbReference>
<dbReference type="CDD" id="cd14684">
    <property type="entry name" value="RanBD1_RanBP2-like"/>
    <property type="match status" value="1"/>
</dbReference>
<dbReference type="CDD" id="cd13177">
    <property type="entry name" value="RanBD2_RanBP2-like"/>
    <property type="match status" value="1"/>
</dbReference>
<dbReference type="CDD" id="cd14685">
    <property type="entry name" value="RanBD3_RanBP2-like"/>
    <property type="match status" value="1"/>
</dbReference>
<dbReference type="CDD" id="cd13178">
    <property type="entry name" value="RanBD4_RanBP2-like"/>
    <property type="match status" value="1"/>
</dbReference>
<dbReference type="FunFam" id="2.30.29.30:FF:000018">
    <property type="entry name" value="E3 SUMO-protein ligase RanBP2"/>
    <property type="match status" value="4"/>
</dbReference>
<dbReference type="FunFam" id="2.40.100.10:FF:000020">
    <property type="entry name" value="E3 SUMO-protein ligase RanBP2"/>
    <property type="match status" value="1"/>
</dbReference>
<dbReference type="FunFam" id="4.10.1060.10:FF:000003">
    <property type="entry name" value="E3 SUMO-protein ligase RanBP2"/>
    <property type="match status" value="7"/>
</dbReference>
<dbReference type="FunFam" id="4.10.1060.10:FF:000018">
    <property type="entry name" value="E3 SUMO-protein ligase RanBP2"/>
    <property type="match status" value="1"/>
</dbReference>
<dbReference type="FunFam" id="1.25.40.10:FF:000114">
    <property type="entry name" value="E3 SUMO-protein ligase RanBP2 isoform X1"/>
    <property type="match status" value="1"/>
</dbReference>
<dbReference type="Gene3D" id="2.40.100.10">
    <property type="entry name" value="Cyclophilin-like"/>
    <property type="match status" value="1"/>
</dbReference>
<dbReference type="Gene3D" id="2.30.29.30">
    <property type="entry name" value="Pleckstrin-homology domain (PH domain)/Phosphotyrosine-binding domain (PTB)"/>
    <property type="match status" value="4"/>
</dbReference>
<dbReference type="Gene3D" id="1.25.40.10">
    <property type="entry name" value="Tetratricopeptide repeat domain"/>
    <property type="match status" value="1"/>
</dbReference>
<dbReference type="Gene3D" id="4.10.1060.10">
    <property type="entry name" value="Zinc finger, RanBP2-type"/>
    <property type="match status" value="8"/>
</dbReference>
<dbReference type="InterPro" id="IPR029000">
    <property type="entry name" value="Cyclophilin-like_dom_sf"/>
</dbReference>
<dbReference type="InterPro" id="IPR020892">
    <property type="entry name" value="Cyclophilin-type_PPIase_CS"/>
</dbReference>
<dbReference type="InterPro" id="IPR002130">
    <property type="entry name" value="Cyclophilin-type_PPIase_dom"/>
</dbReference>
<dbReference type="InterPro" id="IPR022011">
    <property type="entry name" value="IR1-M"/>
</dbReference>
<dbReference type="InterPro" id="IPR011993">
    <property type="entry name" value="PH-like_dom_sf"/>
</dbReference>
<dbReference type="InterPro" id="IPR000156">
    <property type="entry name" value="Ran_bind_dom"/>
</dbReference>
<dbReference type="InterPro" id="IPR045255">
    <property type="entry name" value="RanBP1-like"/>
</dbReference>
<dbReference type="InterPro" id="IPR011990">
    <property type="entry name" value="TPR-like_helical_dom_sf"/>
</dbReference>
<dbReference type="InterPro" id="IPR019734">
    <property type="entry name" value="TPR_rpt"/>
</dbReference>
<dbReference type="InterPro" id="IPR001876">
    <property type="entry name" value="Znf_RanBP2"/>
</dbReference>
<dbReference type="InterPro" id="IPR036443">
    <property type="entry name" value="Znf_RanBP2_sf"/>
</dbReference>
<dbReference type="PANTHER" id="PTHR23138:SF175">
    <property type="entry name" value="E3 SUMO-PROTEIN LIGASE RANBP2-RELATED"/>
    <property type="match status" value="1"/>
</dbReference>
<dbReference type="PANTHER" id="PTHR23138">
    <property type="entry name" value="RAN BINDING PROTEIN"/>
    <property type="match status" value="1"/>
</dbReference>
<dbReference type="Pfam" id="PF12185">
    <property type="entry name" value="IR1-M"/>
    <property type="match status" value="2"/>
</dbReference>
<dbReference type="Pfam" id="PF00160">
    <property type="entry name" value="Pro_isomerase"/>
    <property type="match status" value="1"/>
</dbReference>
<dbReference type="Pfam" id="PF00638">
    <property type="entry name" value="Ran_BP1"/>
    <property type="match status" value="4"/>
</dbReference>
<dbReference type="Pfam" id="PF00641">
    <property type="entry name" value="Zn_ribbon_RanBP"/>
    <property type="match status" value="8"/>
</dbReference>
<dbReference type="PRINTS" id="PR00153">
    <property type="entry name" value="CSAPPISMRASE"/>
</dbReference>
<dbReference type="SMART" id="SM00160">
    <property type="entry name" value="RanBD"/>
    <property type="match status" value="4"/>
</dbReference>
<dbReference type="SMART" id="SM00028">
    <property type="entry name" value="TPR"/>
    <property type="match status" value="1"/>
</dbReference>
<dbReference type="SMART" id="SM00547">
    <property type="entry name" value="ZnF_RBZ"/>
    <property type="match status" value="8"/>
</dbReference>
<dbReference type="SUPFAM" id="SSF50891">
    <property type="entry name" value="Cyclophilin-like"/>
    <property type="match status" value="1"/>
</dbReference>
<dbReference type="SUPFAM" id="SSF50729">
    <property type="entry name" value="PH domain-like"/>
    <property type="match status" value="4"/>
</dbReference>
<dbReference type="SUPFAM" id="SSF90209">
    <property type="entry name" value="Ran binding protein zinc finger-like"/>
    <property type="match status" value="7"/>
</dbReference>
<dbReference type="SUPFAM" id="SSF48452">
    <property type="entry name" value="TPR-like"/>
    <property type="match status" value="1"/>
</dbReference>
<dbReference type="PROSITE" id="PS00170">
    <property type="entry name" value="CSA_PPIASE_1"/>
    <property type="match status" value="1"/>
</dbReference>
<dbReference type="PROSITE" id="PS50072">
    <property type="entry name" value="CSA_PPIASE_2"/>
    <property type="match status" value="1"/>
</dbReference>
<dbReference type="PROSITE" id="PS50196">
    <property type="entry name" value="RANBD1"/>
    <property type="match status" value="4"/>
</dbReference>
<dbReference type="PROSITE" id="PS50005">
    <property type="entry name" value="TPR"/>
    <property type="match status" value="1"/>
</dbReference>
<dbReference type="PROSITE" id="PS50293">
    <property type="entry name" value="TPR_REGION"/>
    <property type="match status" value="1"/>
</dbReference>
<dbReference type="PROSITE" id="PS01358">
    <property type="entry name" value="ZF_RANBP2_1"/>
    <property type="match status" value="8"/>
</dbReference>
<dbReference type="PROSITE" id="PS50199">
    <property type="entry name" value="ZF_RANBP2_2"/>
    <property type="match status" value="8"/>
</dbReference>
<keyword id="KW-0002">3D-structure</keyword>
<keyword id="KW-0007">Acetylation</keyword>
<keyword id="KW-1015">Disulfide bond</keyword>
<keyword id="KW-1017">Isopeptide bond</keyword>
<keyword id="KW-0472">Membrane</keyword>
<keyword id="KW-0479">Metal-binding</keyword>
<keyword id="KW-0488">Methylation</keyword>
<keyword id="KW-0509">mRNA transport</keyword>
<keyword id="KW-0906">Nuclear pore complex</keyword>
<keyword id="KW-0539">Nucleus</keyword>
<keyword id="KW-0597">Phosphoprotein</keyword>
<keyword id="KW-0653">Protein transport</keyword>
<keyword id="KW-1185">Reference proteome</keyword>
<keyword id="KW-0677">Repeat</keyword>
<keyword id="KW-0694">RNA-binding</keyword>
<keyword id="KW-0802">TPR repeat</keyword>
<keyword id="KW-0808">Transferase</keyword>
<keyword id="KW-0811">Translocation</keyword>
<keyword id="KW-0813">Transport</keyword>
<keyword id="KW-0832">Ubl conjugation</keyword>
<keyword id="KW-0833">Ubl conjugation pathway</keyword>
<keyword id="KW-0862">Zinc</keyword>
<keyword id="KW-0863">Zinc-finger</keyword>
<feature type="chain" id="PRO_0000424524" description="E3 SUMO-protein ligase RanBP2">
    <location>
        <begin position="1"/>
        <end position="3224"/>
    </location>
</feature>
<feature type="repeat" description="TPR 1" evidence="7 9">
    <location>
        <begin position="26"/>
        <end position="59"/>
    </location>
</feature>
<feature type="repeat" description="TPR 2" evidence="7 9">
    <location>
        <begin position="60"/>
        <end position="93"/>
    </location>
</feature>
<feature type="repeat" description="TPR 3" evidence="7 9">
    <location>
        <begin position="94"/>
        <end position="128"/>
    </location>
</feature>
<feature type="repeat" description="TPR 4" evidence="7 9">
    <location>
        <begin position="165"/>
        <end position="201"/>
    </location>
</feature>
<feature type="repeat" description="TPR 5" evidence="7 9">
    <location>
        <begin position="287"/>
        <end position="319"/>
    </location>
</feature>
<feature type="repeat" description="TPR 6" evidence="7 9">
    <location>
        <begin position="583"/>
        <end position="616"/>
    </location>
</feature>
<feature type="repeat" description="TPR 7" evidence="7 9">
    <location>
        <begin position="648"/>
        <end position="681"/>
    </location>
</feature>
<feature type="repeat" description="1" evidence="2">
    <location>
        <begin position="1001"/>
        <end position="1002"/>
    </location>
</feature>
<feature type="repeat" description="2" evidence="2">
    <location>
        <begin position="1101"/>
        <end position="1102"/>
    </location>
</feature>
<feature type="repeat" description="3" evidence="2">
    <location>
        <begin position="1142"/>
        <end position="1143"/>
    </location>
</feature>
<feature type="domain" description="RanBD1 1" evidence="5">
    <location>
        <begin position="1171"/>
        <end position="1307"/>
    </location>
</feature>
<feature type="repeat" description="4" evidence="2">
    <location>
        <begin position="1459"/>
        <end position="1460"/>
    </location>
</feature>
<feature type="repeat" description="5" evidence="2">
    <location>
        <begin position="1523"/>
        <end position="1524"/>
    </location>
</feature>
<feature type="repeat" description="6" evidence="2">
    <location>
        <begin position="1586"/>
        <end position="1587"/>
    </location>
</feature>
<feature type="repeat" description="7" evidence="2">
    <location>
        <begin position="1852"/>
        <end position="1853"/>
    </location>
</feature>
<feature type="repeat" description="8" evidence="2">
    <location>
        <begin position="1861"/>
        <end position="1862"/>
    </location>
</feature>
<feature type="repeat" description="9" evidence="2">
    <location>
        <begin position="1900"/>
        <end position="1901"/>
    </location>
</feature>
<feature type="repeat" description="10" evidence="2">
    <location>
        <begin position="1938"/>
        <end position="1939"/>
    </location>
</feature>
<feature type="repeat" description="11" evidence="2">
    <location>
        <begin position="1961"/>
        <end position="1962"/>
    </location>
</feature>
<feature type="domain" description="RanBD1 2" evidence="5">
    <location>
        <begin position="2012"/>
        <end position="2148"/>
    </location>
</feature>
<feature type="repeat" description="12" evidence="2">
    <location>
        <begin position="2260"/>
        <end position="2261"/>
    </location>
</feature>
<feature type="domain" description="RanBD1 3" evidence="5">
    <location>
        <begin position="2309"/>
        <end position="2445"/>
    </location>
</feature>
<feature type="repeat" description="13" evidence="2">
    <location>
        <begin position="2516"/>
        <end position="2517"/>
    </location>
</feature>
<feature type="repeat" description="14" evidence="2">
    <location>
        <begin position="2535"/>
        <end position="2536"/>
    </location>
</feature>
<feature type="repeat" description="15" evidence="2">
    <location>
        <begin position="2545"/>
        <end position="2546"/>
    </location>
</feature>
<feature type="repeat" description="1" evidence="9">
    <location>
        <begin position="2633"/>
        <end position="2685"/>
    </location>
</feature>
<feature type="repeat" description="2" evidence="9">
    <location>
        <begin position="2711"/>
        <end position="2761"/>
    </location>
</feature>
<feature type="repeat" description="16" evidence="2">
    <location>
        <begin position="2840"/>
        <end position="2841"/>
    </location>
</feature>
<feature type="repeat" description="17" evidence="2">
    <location>
        <begin position="2842"/>
        <end position="2843"/>
    </location>
</feature>
<feature type="repeat" description="18" evidence="2">
    <location>
        <begin position="2863"/>
        <end position="2864"/>
    </location>
</feature>
<feature type="repeat" description="19" evidence="2">
    <location>
        <begin position="2880"/>
        <end position="2881"/>
    </location>
</feature>
<feature type="domain" description="RanBD1 4" evidence="5">
    <location>
        <begin position="2911"/>
        <end position="3046"/>
    </location>
</feature>
<feature type="domain" description="PPIase cyclophilin-type" evidence="4">
    <location>
        <begin position="3067"/>
        <end position="3223"/>
    </location>
</feature>
<feature type="repeat" description="20" evidence="2">
    <location>
        <begin position="3106"/>
        <end position="3107"/>
    </location>
</feature>
<feature type="repeat" description="21" evidence="2">
    <location>
        <begin position="3189"/>
        <end position="3190"/>
    </location>
</feature>
<feature type="repeat" description="22" evidence="2">
    <location>
        <begin position="3205"/>
        <end position="3206"/>
    </location>
</feature>
<feature type="zinc finger region" description="RanBP2-type 1" evidence="6">
    <location>
        <begin position="1351"/>
        <end position="1381"/>
    </location>
</feature>
<feature type="zinc finger region" description="RanBP2-type 2" evidence="6">
    <location>
        <begin position="1415"/>
        <end position="1444"/>
    </location>
</feature>
<feature type="zinc finger region" description="RanBP2-type 3" evidence="6">
    <location>
        <begin position="1479"/>
        <end position="1508"/>
    </location>
</feature>
<feature type="zinc finger region" description="RanBP2-type 4" evidence="6">
    <location>
        <begin position="1543"/>
        <end position="1572"/>
    </location>
</feature>
<feature type="zinc finger region" description="RanBP2-type 5" evidence="6">
    <location>
        <begin position="1606"/>
        <end position="1635"/>
    </location>
</feature>
<feature type="zinc finger region" description="RanBP2-type 6" evidence="6">
    <location>
        <begin position="1665"/>
        <end position="1694"/>
    </location>
</feature>
<feature type="zinc finger region" description="RanBP2-type 7" evidence="6">
    <location>
        <begin position="1724"/>
        <end position="1753"/>
    </location>
</feature>
<feature type="zinc finger region" description="RanBP2-type 8" evidence="6">
    <location>
        <begin position="1781"/>
        <end position="1810"/>
    </location>
</feature>
<feature type="region of interest" description="Disordered" evidence="8">
    <location>
        <begin position="767"/>
        <end position="802"/>
    </location>
</feature>
<feature type="region of interest" description="22 X 2 AA repeats of F-G" evidence="10">
    <location>
        <begin position="1001"/>
        <end position="3206"/>
    </location>
</feature>
<feature type="region of interest" description="Disordered" evidence="8">
    <location>
        <begin position="1138"/>
        <end position="1174"/>
    </location>
</feature>
<feature type="region of interest" description="Disordered" evidence="8">
    <location>
        <begin position="1569"/>
        <end position="1595"/>
    </location>
</feature>
<feature type="region of interest" description="Disordered" evidence="8">
    <location>
        <begin position="1632"/>
        <end position="1657"/>
    </location>
</feature>
<feature type="region of interest" description="Disordered" evidence="8">
    <location>
        <begin position="1691"/>
        <end position="1716"/>
    </location>
</feature>
<feature type="region of interest" description="Interaction with BICD2" evidence="2">
    <location>
        <begin position="2147"/>
        <end position="2287"/>
    </location>
</feature>
<feature type="region of interest" description="Disordered" evidence="8">
    <location>
        <begin position="2188"/>
        <end position="2224"/>
    </location>
</feature>
<feature type="region of interest" description="Disordered" evidence="8">
    <location>
        <begin position="2274"/>
        <end position="2307"/>
    </location>
</feature>
<feature type="region of interest" description="Disordered" evidence="8">
    <location>
        <begin position="2556"/>
        <end position="2629"/>
    </location>
</feature>
<feature type="region of interest" description="Interaction with sumoylated RANGAP1" evidence="1">
    <location>
        <begin position="2631"/>
        <end position="2635"/>
    </location>
</feature>
<feature type="region of interest" description="2 X 50 AA approximate repeats">
    <location>
        <begin position="2633"/>
        <end position="2761"/>
    </location>
</feature>
<feature type="region of interest" description="Required for E3 SUMO-ligase activity" evidence="1">
    <location>
        <begin position="2633"/>
        <end position="2710"/>
    </location>
</feature>
<feature type="region of interest" description="Interaction with UBE2I" evidence="1">
    <location>
        <begin position="2633"/>
        <end position="2685"/>
    </location>
</feature>
<feature type="region of interest" description="Interaction with SUMO1" evidence="1">
    <location>
        <begin position="2686"/>
        <end position="2761"/>
    </location>
</feature>
<feature type="region of interest" description="Disordered" evidence="8">
    <location>
        <begin position="2791"/>
        <end position="2818"/>
    </location>
</feature>
<feature type="compositionally biased region" description="Low complexity" evidence="8">
    <location>
        <begin position="785"/>
        <end position="797"/>
    </location>
</feature>
<feature type="compositionally biased region" description="Low complexity" evidence="8">
    <location>
        <begin position="1573"/>
        <end position="1583"/>
    </location>
</feature>
<feature type="compositionally biased region" description="Polar residues" evidence="8">
    <location>
        <begin position="1632"/>
        <end position="1653"/>
    </location>
</feature>
<feature type="compositionally biased region" description="Polar residues" evidence="8">
    <location>
        <begin position="1691"/>
        <end position="1712"/>
    </location>
</feature>
<feature type="compositionally biased region" description="Polar residues" evidence="8">
    <location>
        <begin position="2211"/>
        <end position="2220"/>
    </location>
</feature>
<feature type="compositionally biased region" description="Polar residues" evidence="8">
    <location>
        <begin position="2274"/>
        <end position="2292"/>
    </location>
</feature>
<feature type="compositionally biased region" description="Acidic residues" evidence="8">
    <location>
        <begin position="2293"/>
        <end position="2305"/>
    </location>
</feature>
<feature type="compositionally biased region" description="Polar residues" evidence="8">
    <location>
        <begin position="2556"/>
        <end position="2569"/>
    </location>
</feature>
<feature type="compositionally biased region" description="Basic and acidic residues" evidence="8">
    <location>
        <begin position="2570"/>
        <end position="2593"/>
    </location>
</feature>
<feature type="compositionally biased region" description="Polar residues" evidence="8">
    <location>
        <begin position="2594"/>
        <end position="2611"/>
    </location>
</feature>
<feature type="compositionally biased region" description="Basic and acidic residues" evidence="8">
    <location>
        <begin position="2613"/>
        <end position="2625"/>
    </location>
</feature>
<feature type="compositionally biased region" description="Low complexity" evidence="8">
    <location>
        <begin position="2799"/>
        <end position="2810"/>
    </location>
</feature>
<feature type="modified residue" description="Phosphothreonine" evidence="2">
    <location>
        <position position="19"/>
    </location>
</feature>
<feature type="modified residue" description="Phosphoserine" evidence="2">
    <location>
        <position position="21"/>
    </location>
</feature>
<feature type="modified residue" description="Phosphothreonine" evidence="2">
    <location>
        <position position="779"/>
    </location>
</feature>
<feature type="modified residue" description="Phosphoserine" evidence="2">
    <location>
        <position position="781"/>
    </location>
</feature>
<feature type="modified residue" description="Phosphoserine" evidence="3">
    <location>
        <position position="788"/>
    </location>
</feature>
<feature type="modified residue" description="Phosphoserine" evidence="2">
    <location>
        <position position="837"/>
    </location>
</feature>
<feature type="modified residue" description="Asymmetric dimethylarginine" evidence="2">
    <location>
        <position position="945"/>
    </location>
</feature>
<feature type="modified residue" description="Phosphoserine" evidence="2">
    <location>
        <position position="948"/>
    </location>
</feature>
<feature type="modified residue" description="Phosphoserine" evidence="2">
    <location>
        <position position="955"/>
    </location>
</feature>
<feature type="modified residue" description="Asymmetric dimethylarginine; alternate" evidence="3">
    <location>
        <position position="1016"/>
    </location>
</feature>
<feature type="modified residue" description="Omega-N-methylarginine; alternate" evidence="2">
    <location>
        <position position="1016"/>
    </location>
</feature>
<feature type="modified residue" description="Phosphothreonine" evidence="2">
    <location>
        <position position="1098"/>
    </location>
</feature>
<feature type="modified residue" description="Phosphoserine" evidence="2">
    <location>
        <position position="1103"/>
    </location>
</feature>
<feature type="modified residue" description="Phosphoserine" evidence="2">
    <location>
        <position position="1107"/>
    </location>
</feature>
<feature type="modified residue" description="Phosphoserine" evidence="2">
    <location>
        <position position="1110"/>
    </location>
</feature>
<feature type="modified residue" description="Phosphothreonine" evidence="2">
    <location>
        <position position="1144"/>
    </location>
</feature>
<feature type="modified residue" description="Phosphoserine" evidence="2">
    <location>
        <position position="1160"/>
    </location>
</feature>
<feature type="modified residue" description="Phosphoserine" evidence="2">
    <location>
        <position position="1249"/>
    </location>
</feature>
<feature type="modified residue" description="Phosphothreonine" evidence="2">
    <location>
        <position position="1396"/>
    </location>
</feature>
<feature type="modified residue" description="Phosphothreonine" evidence="2">
    <location>
        <position position="1412"/>
    </location>
</feature>
<feature type="modified residue" description="Phosphoserine" evidence="2">
    <location>
        <position position="1443"/>
    </location>
</feature>
<feature type="modified residue" description="Phosphoserine" evidence="2">
    <location>
        <position position="1450"/>
    </location>
</feature>
<feature type="modified residue" description="Phosphoserine" evidence="2">
    <location>
        <position position="1456"/>
    </location>
</feature>
<feature type="modified residue" description="Phosphoserine" evidence="2">
    <location>
        <position position="1509"/>
    </location>
</feature>
<feature type="modified residue" description="Phosphoserine" evidence="2">
    <location>
        <position position="1520"/>
    </location>
</feature>
<feature type="modified residue" description="Phosphoserine" evidence="2">
    <location>
        <position position="1573"/>
    </location>
</feature>
<feature type="modified residue" description="Phosphoserine" evidence="2">
    <location>
        <position position="1835"/>
    </location>
</feature>
<feature type="modified residue" description="Phosphoserine" evidence="2">
    <location>
        <position position="1869"/>
    </location>
</feature>
<feature type="modified residue" description="Phosphoserine" evidence="2">
    <location>
        <position position="1871"/>
    </location>
</feature>
<feature type="modified residue" description="N6-acetyllysine" evidence="3">
    <location>
        <position position="1977"/>
    </location>
</feature>
<feature type="modified residue" description="Phosphothreonine" evidence="3">
    <location>
        <position position="2005"/>
    </location>
</feature>
<feature type="modified residue" description="Phosphoserine" evidence="3">
    <location>
        <position position="2008"/>
    </location>
</feature>
<feature type="modified residue" description="Phosphothreonine" evidence="3">
    <location>
        <position position="2153"/>
    </location>
</feature>
<feature type="modified residue" description="Phosphoserine" evidence="3">
    <location>
        <position position="2246"/>
    </location>
</feature>
<feature type="modified residue" description="Phosphoserine" evidence="3">
    <location>
        <position position="2251"/>
    </location>
</feature>
<feature type="modified residue" description="Phosphoserine" evidence="2">
    <location>
        <position position="2270"/>
    </location>
</feature>
<feature type="modified residue" description="Phosphoserine" evidence="3">
    <location>
        <position position="2280"/>
    </location>
</feature>
<feature type="modified residue" description="Phosphoserine" evidence="3">
    <location>
        <position position="2290"/>
    </location>
</feature>
<feature type="modified residue" description="Phosphothreonine" evidence="3">
    <location>
        <position position="2293"/>
    </location>
</feature>
<feature type="modified residue" description="Phosphoserine" evidence="3">
    <location>
        <position position="2297"/>
    </location>
</feature>
<feature type="modified residue" description="Phosphoserine" evidence="3">
    <location>
        <position position="2462"/>
    </location>
</feature>
<feature type="modified residue" description="Phosphoserine" evidence="3">
    <location>
        <position position="2493"/>
    </location>
</feature>
<feature type="modified residue" description="Phosphoserine" evidence="3">
    <location>
        <position position="2510"/>
    </location>
</feature>
<feature type="modified residue" description="Phosphoserine" evidence="2">
    <location>
        <position position="2526"/>
    </location>
</feature>
<feature type="modified residue" description="Phosphothreonine" evidence="2">
    <location>
        <position position="2613"/>
    </location>
</feature>
<feature type="modified residue" description="Phosphotyrosine" evidence="2">
    <location>
        <position position="2666"/>
    </location>
</feature>
<feature type="modified residue" description="Phosphoserine" evidence="2">
    <location>
        <position position="2668"/>
    </location>
</feature>
<feature type="modified residue" description="Phosphoserine" evidence="2">
    <location>
        <position position="2741"/>
    </location>
</feature>
<feature type="modified residue" description="Phosphothreonine" evidence="2">
    <location>
        <position position="2743"/>
    </location>
</feature>
<feature type="modified residue" description="Phosphoserine" evidence="2">
    <location>
        <position position="2805"/>
    </location>
</feature>
<feature type="modified residue" description="Phosphoserine" evidence="2">
    <location>
        <position position="2900"/>
    </location>
</feature>
<feature type="modified residue" description="Phosphoserine" evidence="2">
    <location>
        <position position="3207"/>
    </location>
</feature>
<feature type="cross-link" description="Glycyl lysine isopeptide (Lys-Gly) (interchain with G-Cter in SUMO2)" evidence="2">
    <location>
        <position position="1350"/>
    </location>
</feature>
<feature type="cross-link" description="Glycyl lysine isopeptide (Lys-Gly) (interchain with G-Cter in SUMO2)" evidence="2">
    <location>
        <position position="1414"/>
    </location>
</feature>
<feature type="cross-link" description="Glycyl lysine isopeptide (Lys-Gly) (interchain with G-Cter in SUMO2)" evidence="2">
    <location>
        <position position="1596"/>
    </location>
</feature>
<feature type="cross-link" description="Glycyl lysine isopeptide (Lys-Gly) (interchain with G-Cter in SUMO1); alternate" evidence="2">
    <location>
        <position position="1605"/>
    </location>
</feature>
<feature type="cross-link" description="Glycyl lysine isopeptide (Lys-Gly) (interchain with G-Cter in SUMO2); alternate" evidence="2">
    <location>
        <position position="1605"/>
    </location>
</feature>
<feature type="cross-link" description="Glycyl lysine isopeptide (Lys-Gly) (interchain with G-Cter in SUMO2)" evidence="2">
    <location>
        <position position="1655"/>
    </location>
</feature>
<feature type="cross-link" description="Glycyl lysine isopeptide (Lys-Gly) (interchain with G-Cter in SUMO1); alternate" evidence="2">
    <location>
        <position position="1664"/>
    </location>
</feature>
<feature type="cross-link" description="Glycyl lysine isopeptide (Lys-Gly) (interchain with G-Cter in SUMO2); alternate" evidence="2">
    <location>
        <position position="1664"/>
    </location>
</feature>
<feature type="cross-link" description="Glycyl lysine isopeptide (Lys-Gly) (interchain with G-Cter in SUMO2)" evidence="2">
    <location>
        <position position="1714"/>
    </location>
</feature>
<feature type="cross-link" description="Glycyl lysine isopeptide (Lys-Gly) (interchain with G-Cter in SUMO1); alternate" evidence="2">
    <location>
        <position position="1723"/>
    </location>
</feature>
<feature type="cross-link" description="Glycyl lysine isopeptide (Lys-Gly) (interchain with G-Cter in SUMO2); alternate" evidence="2">
    <location>
        <position position="1723"/>
    </location>
</feature>
<feature type="cross-link" description="Glycyl lysine isopeptide (Lys-Gly) (interchain with G-Cter in SUMO2)" evidence="2">
    <location>
        <position position="2022"/>
    </location>
</feature>
<feature type="cross-link" description="Glycyl lysine isopeptide (Lys-Gly) (interchain with G-Cter in SUMO2)" evidence="2">
    <location>
        <position position="2522"/>
    </location>
</feature>
<feature type="cross-link" description="Glycyl lysine isopeptide (Lys-Gly) (interchain with G-Cter in SUMO)" evidence="1">
    <location>
        <position position="2592"/>
    </location>
</feature>
<feature type="cross-link" description="Glycyl lysine isopeptide (Lys-Gly) (interchain with G-Cter in SUMO1); alternate" evidence="2">
    <location>
        <position position="2594"/>
    </location>
</feature>
<feature type="cross-link" description="Glycyl lysine isopeptide (Lys-Gly) (interchain with G-Cter in SUMO2); alternate" evidence="2">
    <location>
        <position position="2594"/>
    </location>
</feature>
<feature type="cross-link" description="Glycyl lysine isopeptide (Lys-Gly) (interchain with G-Cter in SUMO2)" evidence="2">
    <location>
        <position position="2612"/>
    </location>
</feature>
<feature type="cross-link" description="Glycyl lysine isopeptide (Lys-Gly) (interchain with G-Cter in SUMO2)" evidence="2">
    <location>
        <position position="2792"/>
    </location>
</feature>
<feature type="cross-link" description="Glycyl lysine isopeptide (Lys-Gly) (interchain with G-Cter in SUMO2)" evidence="2">
    <location>
        <position position="2815"/>
    </location>
</feature>
<feature type="helix" evidence="11">
    <location>
        <begin position="5"/>
        <end position="18"/>
    </location>
</feature>
<feature type="helix" evidence="11">
    <location>
        <begin position="22"/>
        <end position="26"/>
    </location>
</feature>
<feature type="helix" evidence="11">
    <location>
        <begin position="29"/>
        <end position="38"/>
    </location>
</feature>
<feature type="helix" evidence="11">
    <location>
        <begin position="42"/>
        <end position="55"/>
    </location>
</feature>
<feature type="helix" evidence="11">
    <location>
        <begin position="60"/>
        <end position="72"/>
    </location>
</feature>
<feature type="helix" evidence="11">
    <location>
        <begin position="76"/>
        <end position="89"/>
    </location>
</feature>
<feature type="helix" evidence="11">
    <location>
        <begin position="94"/>
        <end position="107"/>
    </location>
</feature>
<feature type="strand" evidence="11">
    <location>
        <begin position="109"/>
        <end position="112"/>
    </location>
</feature>
<feature type="helix" evidence="11">
    <location>
        <begin position="113"/>
        <end position="124"/>
    </location>
</feature>
<feature type="helix" evidence="11">
    <location>
        <begin position="129"/>
        <end position="140"/>
    </location>
</feature>
<name>RBP2_PANTR</name>
<sequence>MRRSKADVERYIASVQGSTPSPRQKSIKGFYFAKLYYEAKEYDLAKKYICTYINVQERDPKAHRFLGLLYELEENTDKAVECYRRSVELNPTQKDLVLKIAELLCKNDVTDGRAKYWVERAAKLFPGSPAVYKLKEQLLDCEGEDGWNKLFDLIQSELYVRPDDVHVNIRLVEVYRSTKRLKDAVAHCHEAERNIALRSSLEWNSCVVQTLKEYLESLQCLESDKSDWRATNTDLLLAYANLMLLTLSTRDVQESRELLESFDSALQSVKSLGGNDELSATFLEMKGHFYMHAGSLLLKMGQHSSNVQWRALSELAALCYLIAFQVPRPKIKLIKGEAGQNLLEMMACDRLSQSGHMLLNLSRGKQDFLREIVETFANKSGQSALYDALFSSQSPKDTSFLGSDDIGNIDVREPELEDLARYDVGAIRAHDGSLQHLTWLGLQWNSLPALPGIRKWLKQLFHHLPQETSRLETNAPESICILDLEVFLLGVVYTSHLQLKEKCNSHHSSYQPLCLPLPVCKQLCTERQKSWWDAVCTLIHRKAVPGNAAKLRLLVQHEINTLRAQEKHGLQPALLVHWAKCLQKTGSGLNSFYDQREYIGRSVHYWKKVLPLLKIIKKKNSIPEPIDPLFKHFHSVDIQASEIVEYEEDAHITFAILDVVNGNIEDAMTAFESIQSVVSYWNLALIFHRKAEDIENDALSPEEQEECKNYLRKTRDYLIKIIDDSDSNLSVVKKLPVPLESVKEMLKSVMQELEAYSEGGPLYTNGSLRNADSEIKHSTPSHTRYSLSPSKSYKYSPKTPPRWAEDQNSLLKMICQQVEAIKKEMQELKLNSSNSASPHRWPTENYGPDSVPDGYQGSQTFHGAPLTVATTGPSVYYSQSPAYNSQYLLRPAANVTPTKGPVYGMNRLPPQQHIYAYPQQMHTPPVQSSSACMFSQEMYGPPALRFESPATGILSPRGDDYFNYNVQQTSTNPPLPEPGYFTKPPIAAHASRSAESKTIEFGKTNFVQPMPGEGLRPSLPTQAHTTQPTPFKFNSNFKSNDGDFTFSSPQVVTQPPPAAYSNSESLLGLLTSDKPLQGDGYSGAKPIPGGQTIGPRNTFNFGSKNVSGISFTENMGSSQQKNSGFRRSDDMFTFHGPGKSVFGTPTLETANKNHETDGGSAHGDDDDDGPHFEPVVPLPDKIEVKTGEEDEEEFFCNRAKLFRFDVESKEWKERGIGNVKILRHKTSGKIRLLMRREQVLKICANHYISPDMKLTPNAGSDRSFVWHALDYADELPKPEQLAIRFKTPEEAALFKCKFEEAQSILKAPGTNVATASNQAVRIVKEPTSHDNKDICKSDAGNLNFEFQFAKKEGSWWHCNSCSLKNASTAKKCVSCQNLNPSNKELVGPPLAETVFTPKTSPENVQDRFALVTPKKEGHWDCSICLVRNEPTVSRCIACQNTKSANKSGSSFVHQASFKFGQGDLPKPINSDFRSVFSTKEGQWDCSACLVQNEGSSTKCAACQNPRKQSLPATSIPTPASFKFGTSETSKTLKSGFEDMFAKKEGQWDCSSCLVRNEANATRCVACQNPDKPSPSTSVPAPASFKFGTSETSKAPKSGFEGMFTKKEGQWDCSVCLVRNEASATKCVACQNPGKQNQTTSAVSTPASSETSRAPKSGFEGMFTKKEGQWDCSVCLVRNEASATKCIACQSPGKQNQTTSAVSTPASSETSKAPKSGFEGMFTKKEGQWDCSVCLVRNEASATKCIACQCPSKQNQTTAISTPASSEISKAPKSGFEGMFIRKGQWDCSVCCVQNESSSLKCVACDASKPTHKPIAEAPSAFTLGSEMKLHDSPGSQVGTGFKSNFSEKASKFGNTEQGFKFGHVDQENSPSFMFQGSSNTEFKSTKEGFSIPVSADGFKFGISEPGNQEKKSEKPLENDTGFQAQDISGQKNGSGVIFGQTSSTFTFADLAKSTSGEGFQFGKKDPNFKGFSGAGEKLFSSQYGKMANKANTSGDFEKDDDAYKTEDSDDIHFEPVVQMPEKVELVTGEEDEKVLYSQRVKLFRFDAEVSQWKERGLGNLKILKNEVNGKLRMLMRREQVLKVCANHWITTTMNLKPLSGSDRAWMWLASDFSDGDAKLEQLAAKFKTPELAEEFKQKFEECQRLLLDIPLQTPHKLVDTGRAAKLIQRAEEMKSGLKDFKTFLTNDQTKVTEEENKGSGTGAAGASDTTIKPNPENTGPTLEWDNYDLREDALDDSVSSSSVHASPLASSPVRKNLFRFGESTTGFNFSFKSALSPSKSPGKLNQSGTSVGTDEESDVTQEEERDGQYFEPVVPLPDLVEVSSGEENEQVVFSHRAKLYRYDKDVGQWKERGIGDIKILQNYDNKQVRIVMRRDQVLKLCANHRITPDMTLQNMKGTERVWLWTAYDFADGERKVEHLAVRFKLQDVADSFKKIFDEAKTAQEKDSLITPHVSRSSTPRESPCGKIAVAVLEETTRERTDVTQGDDVADAASEVEVSSTSETTTKAVVSPPKFVFGSESVKSIFSSEKSKPFAFGNTSATGSLFGFSFNAPLKSNNSETSSVAQSGSESKVEPNKCELSKNSDIEQSSDSKVKNLSASFPTEESSINYTFKTPEKAKEKKKPEDSPSDDDVLIVYELTPTAEQKALATKLKLPPTFFCYKNRPDYVSEEEEDDEDFETAVKKLNGKLYLEGSEKCRPLEENTADNEKECIIVWEKKPTVEEKAKADTLKLPPTFFCGVCSDTDEDNGNGEDFQSELQKVQEAQKSQTEEITSTTDSVYTGGTEVMVPSFCKSEEPDSITKSISSPSVSSETMDKPVDLSTRKEIDTDSTSQGESKIVSFGFGSSTGLSFADLASSNSGDFAFGSKDKNFQWANTGAAVFGTQSVGTQSAGKVGEDEDGSDEEVVHNEDIHFEPIVSLPEVEVKSGEEDEEILFKERAKLYRWDRDVSQWKERGVGDIKILWHTMKNYYRILMRRDQVFKVCANHVITKTMELKPLNVSNNALVWTASDYADGEAKVEQLAVRFKTKEVADCFKKTFEECQQNLMKLQKGHVSLAAELSKETNPVVFFDVCADGEPLGRITMELFSNIVPRTAENFRALCTGEKGFGFKNSIFHRVIPDFVCQGGDITKHDGTGGQSIYGDKFEDENFDVKHTGPGLLSMANQGQNTNNSQFFITLKKAELLDFKHVVFGFVKDGMDTVKKIESFGSPKGSVCRRITITECGQI</sequence>
<comment type="function">
    <text evidence="2 9">E3 SUMO-protein ligase which facilitates SUMO1 and SUMO2 conjugation by UBE2I. Involved in transport factor (Ran-GTP, karyopherin)-mediated protein import via the F-G repeat-containing domain which acts as a docking site for substrates. Component of the nuclear export pathway. Specific docking site for the nuclear export factor exportin-1. Inhibits EIF4E-dependent mRNA export. Sumoylates PML at 'Lys-490' which is essential for the proper assembly of PML-NB. Recruits BICD2 to the nuclear envelope and cytoplasmic stacks of nuclear pore complex known as annulate lamellae during G2 phase of cell cycle (By similarity). Binds single-stranded RNA (in vitro) (PubMed:22959972). Probable inactive PPIase with no peptidyl-prolyl cis-trans isomerase activity.</text>
</comment>
<comment type="pathway">
    <text>Protein modification; protein sumoylation.</text>
</comment>
<comment type="subunit">
    <text evidence="2 3">Part of the nuclear pore complex. Forms a complex with NXT1, NXF1 and RANGAP1. Forms a tight complex with RANBP1 and UBE2I. Interacts with SUMO1 but not SUMO2. Interacts with PRKN. Interacts with sumoylated RANGAP1. Interacts with CDCA8. Interacts with PML (isoform PML-4). Interacts with BICD2. Interacts with MCM3AP isoform GANP. Interacts with COX11 (By similarity). Interacts with synaptic plasticity regulator PANTS (By similarity).</text>
</comment>
<comment type="subcellular location">
    <subcellularLocation>
        <location evidence="9">Nucleus</location>
    </subcellularLocation>
    <subcellularLocation>
        <location evidence="9">Nucleus membrane</location>
    </subcellularLocation>
    <subcellularLocation>
        <location evidence="9">Nucleus</location>
        <location evidence="9">Nuclear pore complex</location>
    </subcellularLocation>
    <subcellularLocation>
        <location evidence="2">Nucleus envelope</location>
    </subcellularLocation>
    <text evidence="2">Detected in diffuse and discrete intranuclear foci. Cytoplasmic filaments.</text>
</comment>
<comment type="domain">
    <text evidence="2">The PPIase cyclophilin-type domain has high structural similarity with PPIA, but has extremely low and barely detectable proline isomerase activity (in vitro). Only about half of the residues that surround the PPIA active site cleft are conserved (By similarity).</text>
</comment>
<comment type="domain">
    <text evidence="10">Contains FG repeats. FG repeats are interaction sites for karyopherins (importins, exportins) and form probably an affinity gradient, guiding the transport proteins unidirectionally with their cargo through the NPC. FG repeat regions are highly flexible and lack ordered secondary structure. The overall conservation of FG repeats regarding exact sequence, spacing, and repeat unit length is limited.</text>
</comment>
<comment type="PTM">
    <text evidence="2">Polyubiquitinated by PRKN, which leads to proteasomal degradation.</text>
</comment>
<comment type="PTM">
    <text evidence="3">The inner channel of the NPC has a different redox environment from the cytoplasm and allows the formation of interchain disulfide bonds between some nucleoporins, the significant increase of these linkages upon oxidative stress reduces the permeability of the NPC.</text>
</comment>
<comment type="similarity">
    <text evidence="10">Belongs to the RanBP2 E3 ligase family.</text>
</comment>
<comment type="caution">
    <text evidence="2">Despite the presence of a PPIase cyclophilin-type domain, it has probably no peptidyl-prolyl cis-trans isomerase activity.</text>
</comment>
<evidence type="ECO:0000250" key="1"/>
<evidence type="ECO:0000250" key="2">
    <source>
        <dbReference type="UniProtKB" id="P49792"/>
    </source>
</evidence>
<evidence type="ECO:0000250" key="3">
    <source>
        <dbReference type="UniProtKB" id="Q9ERU9"/>
    </source>
</evidence>
<evidence type="ECO:0000255" key="4">
    <source>
        <dbReference type="PROSITE-ProRule" id="PRU00156"/>
    </source>
</evidence>
<evidence type="ECO:0000255" key="5">
    <source>
        <dbReference type="PROSITE-ProRule" id="PRU00164"/>
    </source>
</evidence>
<evidence type="ECO:0000255" key="6">
    <source>
        <dbReference type="PROSITE-ProRule" id="PRU00322"/>
    </source>
</evidence>
<evidence type="ECO:0000255" key="7">
    <source>
        <dbReference type="PROSITE-ProRule" id="PRU00339"/>
    </source>
</evidence>
<evidence type="ECO:0000256" key="8">
    <source>
        <dbReference type="SAM" id="MobiDB-lite"/>
    </source>
</evidence>
<evidence type="ECO:0000269" key="9">
    <source>
    </source>
</evidence>
<evidence type="ECO:0000305" key="10"/>
<evidence type="ECO:0007829" key="11">
    <source>
        <dbReference type="PDB" id="4GA2"/>
    </source>
</evidence>
<reference key="1">
    <citation type="journal article" date="2005" name="Nature">
        <title>Initial sequence of the chimpanzee genome and comparison with the human genome.</title>
        <authorList>
            <consortium name="Chimpanzee sequencing and analysis consortium"/>
        </authorList>
    </citation>
    <scope>NUCLEOTIDE SEQUENCE [LARGE SCALE GENOMIC DNA]</scope>
</reference>
<reference key="2">
    <citation type="journal article" date="2012" name="J. Mol. Biol.">
        <title>Crystal structure of the N-terminal domain of Nup358/RanBP2.</title>
        <authorList>
            <person name="Kassube S.A."/>
            <person name="Stuwe T."/>
            <person name="Lin D.H."/>
            <person name="Antonuk C.D."/>
            <person name="Napetschnig J."/>
            <person name="Blobel G."/>
            <person name="Hoelz A."/>
        </authorList>
    </citation>
    <scope>X-RAY CRYSTALLOGRAPHY (0.95 ANGSTROMS) OF 1-145</scope>
    <scope>FUNCTION</scope>
    <scope>SUBCELLULAR LOCATION</scope>
    <scope>RNA-BINDING</scope>
    <scope>TPR REPEATS</scope>
</reference>
<organism>
    <name type="scientific">Pan troglodytes</name>
    <name type="common">Chimpanzee</name>
    <dbReference type="NCBI Taxonomy" id="9598"/>
    <lineage>
        <taxon>Eukaryota</taxon>
        <taxon>Metazoa</taxon>
        <taxon>Chordata</taxon>
        <taxon>Craniata</taxon>
        <taxon>Vertebrata</taxon>
        <taxon>Euteleostomi</taxon>
        <taxon>Mammalia</taxon>
        <taxon>Eutheria</taxon>
        <taxon>Euarchontoglires</taxon>
        <taxon>Primates</taxon>
        <taxon>Haplorrhini</taxon>
        <taxon>Catarrhini</taxon>
        <taxon>Hominidae</taxon>
        <taxon>Pan</taxon>
    </lineage>
</organism>
<protein>
    <recommendedName>
        <fullName>E3 SUMO-protein ligase RanBP2</fullName>
        <ecNumber evidence="2">2.3.2.-</ecNumber>
    </recommendedName>
    <alternativeName>
        <fullName>358 kDa nucleoporin</fullName>
    </alternativeName>
    <alternativeName>
        <fullName>Nuclear pore complex protein Nup358</fullName>
    </alternativeName>
    <alternativeName>
        <fullName>Nucleoporin Nup358</fullName>
    </alternativeName>
    <alternativeName>
        <fullName>Ran-binding protein 2</fullName>
        <shortName>RanBP2</shortName>
    </alternativeName>
</protein>
<accession>H2QII6</accession>
<gene>
    <name type="primary">RANBP2</name>
    <name type="synonym">NUP358</name>
</gene>
<proteinExistence type="evidence at protein level"/>